<keyword id="KW-0966">Cell projection</keyword>
<keyword id="KW-0969">Cilium</keyword>
<keyword id="KW-0963">Cytoplasm</keyword>
<keyword id="KW-0206">Cytoskeleton</keyword>
<keyword id="KW-0243">Dynein</keyword>
<keyword id="KW-0282">Flagellum</keyword>
<keyword id="KW-0493">Microtubule</keyword>
<keyword id="KW-0505">Motor protein</keyword>
<keyword id="KW-0677">Repeat</keyword>
<proteinExistence type="evidence at transcript level"/>
<comment type="function">
    <text>Force generating protein of eukaryotic cilia and flagella. Produces force towards the minus ends of microtubules. Dynein has ATPase activity.</text>
</comment>
<comment type="subunit">
    <text>Consists of at least two heavy chains and a number of intermediate and low mass polypeptides.</text>
</comment>
<comment type="subcellular location">
    <subcellularLocation>
        <location>Cytoplasm</location>
        <location>Cytoskeleton</location>
        <location>Cilium axoneme</location>
    </subcellularLocation>
    <subcellularLocation>
        <location>Cytoplasm</location>
        <location>Cytoskeleton</location>
        <location>Flagellum axoneme</location>
    </subcellularLocation>
</comment>
<comment type="similarity">
    <text evidence="1">Belongs to the dynein heavy chain family.</text>
</comment>
<reference key="1">
    <citation type="journal article" date="1989" name="EMBO J.">
        <title>Isolation of dynein heavy chain cDNAs from trout testis which predict an extensive carboxyl-terminal alpha-helical coiled-coil domain.</title>
        <authorList>
            <person name="Garber A.T."/>
            <person name="Retief J.D."/>
            <person name="Dixon G.H."/>
        </authorList>
    </citation>
    <scope>NUCLEOTIDE SEQUENCE [MRNA]</scope>
    <source>
        <tissue>Testis</tissue>
    </source>
</reference>
<evidence type="ECO:0000305" key="1"/>
<protein>
    <recommendedName>
        <fullName>Dynein heavy chain</fullName>
        <shortName>DYHC</shortName>
    </recommendedName>
</protein>
<organism>
    <name type="scientific">Oncorhynchus mykiss</name>
    <name type="common">Rainbow trout</name>
    <name type="synonym">Salmo gairdneri</name>
    <dbReference type="NCBI Taxonomy" id="8022"/>
    <lineage>
        <taxon>Eukaryota</taxon>
        <taxon>Metazoa</taxon>
        <taxon>Chordata</taxon>
        <taxon>Craniata</taxon>
        <taxon>Vertebrata</taxon>
        <taxon>Euteleostomi</taxon>
        <taxon>Actinopterygii</taxon>
        <taxon>Neopterygii</taxon>
        <taxon>Teleostei</taxon>
        <taxon>Protacanthopterygii</taxon>
        <taxon>Salmoniformes</taxon>
        <taxon>Salmonidae</taxon>
        <taxon>Salmoninae</taxon>
        <taxon>Oncorhynchus</taxon>
    </lineage>
</organism>
<dbReference type="EMBL" id="X15476">
    <property type="protein sequence ID" value="CAA33503.1"/>
    <property type="molecule type" value="mRNA"/>
</dbReference>
<dbReference type="PIR" id="S09598">
    <property type="entry name" value="S09598"/>
</dbReference>
<dbReference type="Proteomes" id="UP000694395">
    <property type="component" value="Unplaced"/>
</dbReference>
<dbReference type="GO" id="GO:0005737">
    <property type="term" value="C:cytoplasm"/>
    <property type="evidence" value="ECO:0007669"/>
    <property type="project" value="UniProtKB-KW"/>
</dbReference>
<dbReference type="GO" id="GO:0030286">
    <property type="term" value="C:dynein complex"/>
    <property type="evidence" value="ECO:0007669"/>
    <property type="project" value="UniProtKB-KW"/>
</dbReference>
<dbReference type="GO" id="GO:0005874">
    <property type="term" value="C:microtubule"/>
    <property type="evidence" value="ECO:0007669"/>
    <property type="project" value="UniProtKB-KW"/>
</dbReference>
<dbReference type="GO" id="GO:0031514">
    <property type="term" value="C:motile cilium"/>
    <property type="evidence" value="ECO:0007669"/>
    <property type="project" value="UniProtKB-KW"/>
</dbReference>
<feature type="chain" id="PRO_0000114651" description="Dynein heavy chain">
    <location>
        <begin position="1" status="less than"/>
        <end position="515"/>
    </location>
</feature>
<feature type="repeat">
    <location>
        <begin position="4"/>
        <end position="11"/>
    </location>
</feature>
<feature type="repeat">
    <location>
        <begin position="12"/>
        <end position="19"/>
    </location>
</feature>
<feature type="repeat">
    <location>
        <begin position="20"/>
        <end position="27"/>
    </location>
</feature>
<feature type="repeat" description="Incomplete">
    <location>
        <begin position="28"/>
        <end position="32"/>
    </location>
</feature>
<feature type="region of interest" description="68 X 7 AA tandem repeats of [IL]-H-V-I-Q-Y-S">
    <location>
        <begin position="35"/>
        <end position="508"/>
    </location>
</feature>
<feature type="non-terminal residue">
    <location>
        <position position="1"/>
    </location>
</feature>
<sequence length="515" mass="60923">PSMLFSTVPSTLFSTVPSTLFSTVPSTLFSTVSSVIQYSIHVIQYSTLHVIQYSTLHVIQYSTLHVIQYSTLNVIQYSTLHVIQYSTLHVIQYSILHVIQYSIHVIQYSIHVTQYSILHVIQYSIHVIQYSIHVIQYSTHVIQYSIHVIQYSIHVIQYSILHVIQYSIHVIQYSIHVIQYSTHVIQYSIHVIQYSILHVIQYSILHVIQYSILHVIQYSIHVIQYSIHVIQYSIHVIQYSIHVIQYSILHVIQYSIHVIQYSIHVIQYSIHVIQYSILHVIQYSILHVIQYSIHVIQYSIHVIQYSIHVIQYSILHVIQYSIHVIQYSIHVIQYSIHVIQYSIHVIQYSIHVIQYSILHVIQYSIHVIQYSIHVIQYSIHVIQYSIHVIQYSILHVIQYSILHVIQYSIHVIQYSILHVIQYSIHVIQYSIHVIQYSILHVIQYSIHVIQYSILHVIQYSIHVIQYSIHVIQYSILHVIQYSIHVIQYSILHVIQYSIHVIQYSILHVMILACSM</sequence>
<accession>P15305</accession>
<name>DYHC_ONCMY</name>